<evidence type="ECO:0000255" key="1">
    <source>
        <dbReference type="HAMAP-Rule" id="MF_01141"/>
    </source>
</evidence>
<reference key="1">
    <citation type="journal article" date="2002" name="Lancet">
        <title>Genome and virulence determinants of high virulence community-acquired MRSA.</title>
        <authorList>
            <person name="Baba T."/>
            <person name="Takeuchi F."/>
            <person name="Kuroda M."/>
            <person name="Yuzawa H."/>
            <person name="Aoki K."/>
            <person name="Oguchi A."/>
            <person name="Nagai Y."/>
            <person name="Iwama N."/>
            <person name="Asano K."/>
            <person name="Naimi T."/>
            <person name="Kuroda H."/>
            <person name="Cui L."/>
            <person name="Yamamoto K."/>
            <person name="Hiramatsu K."/>
        </authorList>
    </citation>
    <scope>NUCLEOTIDE SEQUENCE [LARGE SCALE GENOMIC DNA]</scope>
    <source>
        <strain>MW2</strain>
    </source>
</reference>
<protein>
    <recommendedName>
        <fullName evidence="1">Antiholin-like protein LrgA</fullName>
    </recommendedName>
</protein>
<name>LRGA_STAAW</name>
<sequence length="145" mass="15568">MKQQKDASKPAHFFHQVIVIALVLFVSKIIESFMPIPMPGSVIGLVLLFVLLCTGAVKLGEVEKVGTTLTNNIGLLFVPAGISVVNSLGVISQAPFLIIGLIIVSTILLLICTGYVTQIIMKVTSRSKGDKVTKKIKIEEAQAHD</sequence>
<gene>
    <name evidence="1" type="primary">lrgA</name>
    <name type="ordered locus">MW0238</name>
</gene>
<organism>
    <name type="scientific">Staphylococcus aureus (strain MW2)</name>
    <dbReference type="NCBI Taxonomy" id="196620"/>
    <lineage>
        <taxon>Bacteria</taxon>
        <taxon>Bacillati</taxon>
        <taxon>Bacillota</taxon>
        <taxon>Bacilli</taxon>
        <taxon>Bacillales</taxon>
        <taxon>Staphylococcaceae</taxon>
        <taxon>Staphylococcus</taxon>
    </lineage>
</organism>
<accession>Q8NYH2</accession>
<proteinExistence type="inferred from homology"/>
<keyword id="KW-1003">Cell membrane</keyword>
<keyword id="KW-0204">Cytolysis</keyword>
<keyword id="KW-0472">Membrane</keyword>
<keyword id="KW-0812">Transmembrane</keyword>
<keyword id="KW-1133">Transmembrane helix</keyword>
<comment type="function">
    <text evidence="1">Inhibits the expression or activity of extracellular murein hydrolases by interacting, possibly with LrgB, with the holin-like proteins CidA and/or CidB. The LrgAB and CidAB proteins may affect the proton motive force of the membrane. May be involved in programmed cell death (PCD), possibly triggering PCD in response to antibiotics and environmental stresses.</text>
</comment>
<comment type="subcellular location">
    <subcellularLocation>
        <location evidence="1">Cell membrane</location>
        <topology evidence="1">Multi-pass membrane protein</topology>
    </subcellularLocation>
</comment>
<comment type="similarity">
    <text evidence="1">Belongs to the CidA/LrgA family. LrgA subfamily.</text>
</comment>
<dbReference type="EMBL" id="BA000033">
    <property type="protein sequence ID" value="BAB94103.1"/>
    <property type="molecule type" value="Genomic_DNA"/>
</dbReference>
<dbReference type="SMR" id="Q8NYH2"/>
<dbReference type="KEGG" id="sam:MW0238"/>
<dbReference type="HOGENOM" id="CLU_113736_0_1_9"/>
<dbReference type="GO" id="GO:0005886">
    <property type="term" value="C:plasma membrane"/>
    <property type="evidence" value="ECO:0007669"/>
    <property type="project" value="UniProtKB-SubCell"/>
</dbReference>
<dbReference type="GO" id="GO:0019835">
    <property type="term" value="P:cytolysis"/>
    <property type="evidence" value="ECO:0007669"/>
    <property type="project" value="UniProtKB-UniRule"/>
</dbReference>
<dbReference type="GO" id="GO:0031640">
    <property type="term" value="P:killing of cells of another organism"/>
    <property type="evidence" value="ECO:0007669"/>
    <property type="project" value="UniProtKB-KW"/>
</dbReference>
<dbReference type="GO" id="GO:0012501">
    <property type="term" value="P:programmed cell death"/>
    <property type="evidence" value="ECO:0007669"/>
    <property type="project" value="UniProtKB-UniRule"/>
</dbReference>
<dbReference type="HAMAP" id="MF_01141">
    <property type="entry name" value="LrgA"/>
    <property type="match status" value="1"/>
</dbReference>
<dbReference type="InterPro" id="IPR023736">
    <property type="entry name" value="Antiholin-like_LrgA"/>
</dbReference>
<dbReference type="InterPro" id="IPR005538">
    <property type="entry name" value="LrgA/CidA"/>
</dbReference>
<dbReference type="NCBIfam" id="NF003155">
    <property type="entry name" value="PRK04125.1"/>
    <property type="match status" value="1"/>
</dbReference>
<dbReference type="PANTHER" id="PTHR33931:SF4">
    <property type="entry name" value="ANTIHOLIN-LIKE PROTEIN LRGA"/>
    <property type="match status" value="1"/>
</dbReference>
<dbReference type="PANTHER" id="PTHR33931">
    <property type="entry name" value="HOLIN-LIKE PROTEIN CIDA-RELATED"/>
    <property type="match status" value="1"/>
</dbReference>
<dbReference type="Pfam" id="PF03788">
    <property type="entry name" value="LrgA"/>
    <property type="match status" value="1"/>
</dbReference>
<feature type="chain" id="PRO_0000213196" description="Antiholin-like protein LrgA">
    <location>
        <begin position="1"/>
        <end position="145"/>
    </location>
</feature>
<feature type="transmembrane region" description="Helical" evidence="1">
    <location>
        <begin position="13"/>
        <end position="30"/>
    </location>
</feature>
<feature type="transmembrane region" description="Helical" evidence="1">
    <location>
        <begin position="40"/>
        <end position="62"/>
    </location>
</feature>
<feature type="transmembrane region" description="Helical" evidence="1">
    <location>
        <begin position="69"/>
        <end position="91"/>
    </location>
</feature>
<feature type="transmembrane region" description="Helical" evidence="1">
    <location>
        <begin position="95"/>
        <end position="117"/>
    </location>
</feature>